<protein>
    <recommendedName>
        <fullName evidence="1">Serine hydroxymethyltransferase</fullName>
        <shortName evidence="1">SHMT</shortName>
        <shortName evidence="1">Serine methylase</shortName>
        <ecNumber evidence="1">2.1.2.1</ecNumber>
    </recommendedName>
</protein>
<sequence>MTTAEPSKTVQAAFRDTAIFDLIAQEAERQRVGLELIASENFCSAEVRAAQGSVLTNKYAEGYPGKRWYGGCEVVDEVERLAIERVKQLFGAEWANVQPHSGSSANLAVYNALLEPGDTVLGMDLAHGGHLTHGSPVNFSGLRYRVVGYKVNPETELIDMEEVRRLAHEHQPKMIIAGASAYSRIIDFAAFREIADEVGALLFADIAHIAGLIAAGLHPNALPHAHVVASTTHKTLRGPRGGVILSNDPEIGAKIDRAVFPGYQGGPLEHVIAAKAVAFGEALQPEFKDYAAQIIRNAQALAGAFQNRGYRVVSGGTDNHLFVLDLRPQGLNGTKATRRLDANDITISKSTLPYDTEKILHGGGIRIGTPAITTRGMKEADMERVADLIDRALKGEDVKAEVHAFAGSFPLP</sequence>
<comment type="function">
    <text evidence="1">Catalyzes the reversible interconversion of serine and glycine with tetrahydrofolate (THF) serving as the one-carbon carrier. This reaction serves as the major source of one-carbon groups required for the biosynthesis of purines, thymidylate, methionine, and other important biomolecules. Also exhibits THF-independent aldolase activity toward beta-hydroxyamino acids, producing glycine and aldehydes, via a retro-aldol mechanism.</text>
</comment>
<comment type="catalytic activity">
    <reaction evidence="1">
        <text>(6R)-5,10-methylene-5,6,7,8-tetrahydrofolate + glycine + H2O = (6S)-5,6,7,8-tetrahydrofolate + L-serine</text>
        <dbReference type="Rhea" id="RHEA:15481"/>
        <dbReference type="ChEBI" id="CHEBI:15377"/>
        <dbReference type="ChEBI" id="CHEBI:15636"/>
        <dbReference type="ChEBI" id="CHEBI:33384"/>
        <dbReference type="ChEBI" id="CHEBI:57305"/>
        <dbReference type="ChEBI" id="CHEBI:57453"/>
        <dbReference type="EC" id="2.1.2.1"/>
    </reaction>
</comment>
<comment type="cofactor">
    <cofactor evidence="1">
        <name>pyridoxal 5'-phosphate</name>
        <dbReference type="ChEBI" id="CHEBI:597326"/>
    </cofactor>
</comment>
<comment type="pathway">
    <text evidence="1">One-carbon metabolism; tetrahydrofolate interconversion.</text>
</comment>
<comment type="pathway">
    <text evidence="1">Amino-acid biosynthesis; glycine biosynthesis; glycine from L-serine: step 1/1.</text>
</comment>
<comment type="subunit">
    <text evidence="1">Homodimer.</text>
</comment>
<comment type="subcellular location">
    <subcellularLocation>
        <location evidence="1">Cytoplasm</location>
    </subcellularLocation>
</comment>
<comment type="similarity">
    <text evidence="1">Belongs to the SHMT family.</text>
</comment>
<gene>
    <name evidence="1" type="primary">glyA</name>
    <name type="ordered locus">Dgeo_0221</name>
</gene>
<name>GLYA_DEIGD</name>
<evidence type="ECO:0000255" key="1">
    <source>
        <dbReference type="HAMAP-Rule" id="MF_00051"/>
    </source>
</evidence>
<proteinExistence type="inferred from homology"/>
<accession>Q1J1W0</accession>
<reference key="1">
    <citation type="submission" date="2006-04" db="EMBL/GenBank/DDBJ databases">
        <title>Complete sequence of chromosome of Deinococcus geothermalis DSM 11300.</title>
        <authorList>
            <person name="Copeland A."/>
            <person name="Lucas S."/>
            <person name="Lapidus A."/>
            <person name="Barry K."/>
            <person name="Detter J.C."/>
            <person name="Glavina del Rio T."/>
            <person name="Hammon N."/>
            <person name="Israni S."/>
            <person name="Dalin E."/>
            <person name="Tice H."/>
            <person name="Pitluck S."/>
            <person name="Brettin T."/>
            <person name="Bruce D."/>
            <person name="Han C."/>
            <person name="Tapia R."/>
            <person name="Saunders E."/>
            <person name="Gilna P."/>
            <person name="Schmutz J."/>
            <person name="Larimer F."/>
            <person name="Land M."/>
            <person name="Hauser L."/>
            <person name="Kyrpides N."/>
            <person name="Kim E."/>
            <person name="Daly M.J."/>
            <person name="Fredrickson J.K."/>
            <person name="Makarova K.S."/>
            <person name="Gaidamakova E.K."/>
            <person name="Zhai M."/>
            <person name="Richardson P."/>
        </authorList>
    </citation>
    <scope>NUCLEOTIDE SEQUENCE [LARGE SCALE GENOMIC DNA]</scope>
    <source>
        <strain>DSM 11300 / CIP 105573 / AG-3a</strain>
    </source>
</reference>
<feature type="chain" id="PRO_1000006243" description="Serine hydroxymethyltransferase">
    <location>
        <begin position="1"/>
        <end position="412"/>
    </location>
</feature>
<feature type="binding site" evidence="1">
    <location>
        <position position="125"/>
    </location>
    <ligand>
        <name>(6S)-5,6,7,8-tetrahydrofolate</name>
        <dbReference type="ChEBI" id="CHEBI:57453"/>
    </ligand>
</feature>
<feature type="binding site" evidence="1">
    <location>
        <begin position="129"/>
        <end position="131"/>
    </location>
    <ligand>
        <name>(6S)-5,6,7,8-tetrahydrofolate</name>
        <dbReference type="ChEBI" id="CHEBI:57453"/>
    </ligand>
</feature>
<feature type="binding site" evidence="1">
    <location>
        <position position="250"/>
    </location>
    <ligand>
        <name>(6S)-5,6,7,8-tetrahydrofolate</name>
        <dbReference type="ChEBI" id="CHEBI:57453"/>
    </ligand>
</feature>
<feature type="site" description="Plays an important role in substrate specificity" evidence="1">
    <location>
        <position position="233"/>
    </location>
</feature>
<feature type="modified residue" description="N6-(pyridoxal phosphate)lysine" evidence="1">
    <location>
        <position position="234"/>
    </location>
</feature>
<dbReference type="EC" id="2.1.2.1" evidence="1"/>
<dbReference type="EMBL" id="CP000359">
    <property type="protein sequence ID" value="ABF44524.1"/>
    <property type="molecule type" value="Genomic_DNA"/>
</dbReference>
<dbReference type="RefSeq" id="WP_011529371.1">
    <property type="nucleotide sequence ID" value="NC_008025.1"/>
</dbReference>
<dbReference type="SMR" id="Q1J1W0"/>
<dbReference type="STRING" id="319795.Dgeo_0221"/>
<dbReference type="KEGG" id="dge:Dgeo_0221"/>
<dbReference type="eggNOG" id="COG0112">
    <property type="taxonomic scope" value="Bacteria"/>
</dbReference>
<dbReference type="HOGENOM" id="CLU_022477_2_1_0"/>
<dbReference type="UniPathway" id="UPA00193"/>
<dbReference type="UniPathway" id="UPA00288">
    <property type="reaction ID" value="UER01023"/>
</dbReference>
<dbReference type="Proteomes" id="UP000002431">
    <property type="component" value="Chromosome"/>
</dbReference>
<dbReference type="GO" id="GO:0005829">
    <property type="term" value="C:cytosol"/>
    <property type="evidence" value="ECO:0007669"/>
    <property type="project" value="TreeGrafter"/>
</dbReference>
<dbReference type="GO" id="GO:0004372">
    <property type="term" value="F:glycine hydroxymethyltransferase activity"/>
    <property type="evidence" value="ECO:0007669"/>
    <property type="project" value="UniProtKB-UniRule"/>
</dbReference>
<dbReference type="GO" id="GO:0030170">
    <property type="term" value="F:pyridoxal phosphate binding"/>
    <property type="evidence" value="ECO:0007669"/>
    <property type="project" value="UniProtKB-UniRule"/>
</dbReference>
<dbReference type="GO" id="GO:0019264">
    <property type="term" value="P:glycine biosynthetic process from serine"/>
    <property type="evidence" value="ECO:0007669"/>
    <property type="project" value="UniProtKB-UniRule"/>
</dbReference>
<dbReference type="GO" id="GO:0035999">
    <property type="term" value="P:tetrahydrofolate interconversion"/>
    <property type="evidence" value="ECO:0007669"/>
    <property type="project" value="UniProtKB-UniRule"/>
</dbReference>
<dbReference type="CDD" id="cd00378">
    <property type="entry name" value="SHMT"/>
    <property type="match status" value="1"/>
</dbReference>
<dbReference type="FunFam" id="3.40.640.10:FF:000001">
    <property type="entry name" value="Serine hydroxymethyltransferase"/>
    <property type="match status" value="1"/>
</dbReference>
<dbReference type="Gene3D" id="3.90.1150.10">
    <property type="entry name" value="Aspartate Aminotransferase, domain 1"/>
    <property type="match status" value="1"/>
</dbReference>
<dbReference type="Gene3D" id="3.40.640.10">
    <property type="entry name" value="Type I PLP-dependent aspartate aminotransferase-like (Major domain)"/>
    <property type="match status" value="1"/>
</dbReference>
<dbReference type="HAMAP" id="MF_00051">
    <property type="entry name" value="SHMT"/>
    <property type="match status" value="1"/>
</dbReference>
<dbReference type="InterPro" id="IPR015424">
    <property type="entry name" value="PyrdxlP-dep_Trfase"/>
</dbReference>
<dbReference type="InterPro" id="IPR015421">
    <property type="entry name" value="PyrdxlP-dep_Trfase_major"/>
</dbReference>
<dbReference type="InterPro" id="IPR015422">
    <property type="entry name" value="PyrdxlP-dep_Trfase_small"/>
</dbReference>
<dbReference type="InterPro" id="IPR001085">
    <property type="entry name" value="Ser_HO-MeTrfase"/>
</dbReference>
<dbReference type="InterPro" id="IPR049943">
    <property type="entry name" value="Ser_HO-MeTrfase-like"/>
</dbReference>
<dbReference type="InterPro" id="IPR019798">
    <property type="entry name" value="Ser_HO-MeTrfase_PLP_BS"/>
</dbReference>
<dbReference type="InterPro" id="IPR039429">
    <property type="entry name" value="SHMT-like_dom"/>
</dbReference>
<dbReference type="NCBIfam" id="NF000586">
    <property type="entry name" value="PRK00011.1"/>
    <property type="match status" value="1"/>
</dbReference>
<dbReference type="PANTHER" id="PTHR11680">
    <property type="entry name" value="SERINE HYDROXYMETHYLTRANSFERASE"/>
    <property type="match status" value="1"/>
</dbReference>
<dbReference type="PANTHER" id="PTHR11680:SF35">
    <property type="entry name" value="SERINE HYDROXYMETHYLTRANSFERASE 1"/>
    <property type="match status" value="1"/>
</dbReference>
<dbReference type="Pfam" id="PF00464">
    <property type="entry name" value="SHMT"/>
    <property type="match status" value="1"/>
</dbReference>
<dbReference type="PIRSF" id="PIRSF000412">
    <property type="entry name" value="SHMT"/>
    <property type="match status" value="1"/>
</dbReference>
<dbReference type="SUPFAM" id="SSF53383">
    <property type="entry name" value="PLP-dependent transferases"/>
    <property type="match status" value="1"/>
</dbReference>
<dbReference type="PROSITE" id="PS00096">
    <property type="entry name" value="SHMT"/>
    <property type="match status" value="1"/>
</dbReference>
<keyword id="KW-0028">Amino-acid biosynthesis</keyword>
<keyword id="KW-0963">Cytoplasm</keyword>
<keyword id="KW-0554">One-carbon metabolism</keyword>
<keyword id="KW-0663">Pyridoxal phosphate</keyword>
<keyword id="KW-0808">Transferase</keyword>
<organism>
    <name type="scientific">Deinococcus geothermalis (strain DSM 11300 / CIP 105573 / AG-3a)</name>
    <dbReference type="NCBI Taxonomy" id="319795"/>
    <lineage>
        <taxon>Bacteria</taxon>
        <taxon>Thermotogati</taxon>
        <taxon>Deinococcota</taxon>
        <taxon>Deinococci</taxon>
        <taxon>Deinococcales</taxon>
        <taxon>Deinococcaceae</taxon>
        <taxon>Deinococcus</taxon>
    </lineage>
</organism>